<organism>
    <name type="scientific">Salmonella typhimurium (strain LT2 / SGSC1412 / ATCC 700720)</name>
    <dbReference type="NCBI Taxonomy" id="99287"/>
    <lineage>
        <taxon>Bacteria</taxon>
        <taxon>Pseudomonadati</taxon>
        <taxon>Pseudomonadota</taxon>
        <taxon>Gammaproteobacteria</taxon>
        <taxon>Enterobacterales</taxon>
        <taxon>Enterobacteriaceae</taxon>
        <taxon>Salmonella</taxon>
    </lineage>
</organism>
<reference key="1">
    <citation type="journal article" date="1994" name="Biochim. Biophys. Acta">
        <title>Nucleotide sequence of the flgD gene of Salmonella typhimurium which is essential for flagellar hook formation.</title>
        <authorList>
            <person name="Kutsukake K."/>
            <person name="Doi H."/>
        </authorList>
    </citation>
    <scope>NUCLEOTIDE SEQUENCE [GENOMIC DNA]</scope>
    <source>
        <strain>LT2</strain>
    </source>
</reference>
<reference key="2">
    <citation type="journal article" date="2001" name="Nature">
        <title>Complete genome sequence of Salmonella enterica serovar Typhimurium LT2.</title>
        <authorList>
            <person name="McClelland M."/>
            <person name="Sanderson K.E."/>
            <person name="Spieth J."/>
            <person name="Clifton S.W."/>
            <person name="Latreille P."/>
            <person name="Courtney L."/>
            <person name="Porwollik S."/>
            <person name="Ali J."/>
            <person name="Dante M."/>
            <person name="Du F."/>
            <person name="Hou S."/>
            <person name="Layman D."/>
            <person name="Leonard S."/>
            <person name="Nguyen C."/>
            <person name="Scott K."/>
            <person name="Holmes A."/>
            <person name="Grewal N."/>
            <person name="Mulvaney E."/>
            <person name="Ryan E."/>
            <person name="Sun H."/>
            <person name="Florea L."/>
            <person name="Miller W."/>
            <person name="Stoneking T."/>
            <person name="Nhan M."/>
            <person name="Waterston R."/>
            <person name="Wilson R.K."/>
        </authorList>
    </citation>
    <scope>NUCLEOTIDE SEQUENCE [LARGE SCALE GENOMIC DNA]</scope>
    <source>
        <strain>LT2 / SGSC1412 / ATCC 700720</strain>
    </source>
</reference>
<reference key="3">
    <citation type="journal article" date="1990" name="J. Mol. Biol.">
        <title>Flagellar hook and hook-associated proteins of Salmonella typhimurium and their relationship to other axial components of the flagellum.</title>
        <authorList>
            <person name="Homma M."/>
            <person name="Derosier D.J."/>
            <person name="Macnab R.M."/>
        </authorList>
    </citation>
    <scope>NUCLEOTIDE SEQUENCE [GENOMIC DNA] OF 223-232</scope>
</reference>
<reference key="4">
    <citation type="journal article" date="1994" name="J. Bacteriol.">
        <title>FlgD is a scaffolding protein needed for flagellar hook assembly in Salmonella typhimurium.</title>
        <authorList>
            <person name="Ohnishi K."/>
            <person name="Ohto Y."/>
            <person name="Aizawa S."/>
            <person name="Macnab R.M."/>
            <person name="Lino T."/>
        </authorList>
    </citation>
    <scope>CHARACTERIZATION</scope>
</reference>
<sequence length="232" mass="23988">MSIAVNMNDPTNTGVKTTTGSGSMTGSNAADLQSSFLTLLVAQLKNQDPTNPLQNNELTTQLAQISTVSGIEKLNTTLGAISGQIDNSQSLQATTLIGHGVMVPGTTILAGKGAEEGAVTSTTPFGVELQQPADKVTATITDKDGRVVRTLEIGELRAGVHTFTWDGKQTDGTTVPNGSYNIAITASNGGTQLVAQPLQFALVQGVTKGSNGNLLDLGTYGTTTLDEVRQII</sequence>
<evidence type="ECO:0000256" key="1">
    <source>
        <dbReference type="SAM" id="MobiDB-lite"/>
    </source>
</evidence>
<evidence type="ECO:0000305" key="2"/>
<evidence type="ECO:0007829" key="3">
    <source>
        <dbReference type="PDB" id="7BHQ"/>
    </source>
</evidence>
<evidence type="ECO:0007829" key="4">
    <source>
        <dbReference type="PDB" id="7EH9"/>
    </source>
</evidence>
<proteinExistence type="evidence at protein level"/>
<feature type="chain" id="PRO_0000180814" description="Basal-body rod modification protein FlgD">
    <location>
        <begin position="1"/>
        <end position="232"/>
    </location>
</feature>
<feature type="region of interest" description="Disordered" evidence="1">
    <location>
        <begin position="1"/>
        <end position="26"/>
    </location>
</feature>
<feature type="compositionally biased region" description="Low complexity" evidence="1">
    <location>
        <begin position="11"/>
        <end position="26"/>
    </location>
</feature>
<feature type="helix" evidence="3">
    <location>
        <begin position="33"/>
        <end position="46"/>
    </location>
</feature>
<feature type="strand" evidence="3">
    <location>
        <begin position="49"/>
        <end position="51"/>
    </location>
</feature>
<feature type="helix" evidence="3">
    <location>
        <begin position="58"/>
        <end position="90"/>
    </location>
</feature>
<feature type="helix" evidence="4">
    <location>
        <begin position="91"/>
        <end position="94"/>
    </location>
</feature>
<feature type="turn" evidence="4">
    <location>
        <begin position="95"/>
        <end position="98"/>
    </location>
</feature>
<feature type="strand" evidence="4">
    <location>
        <begin position="99"/>
        <end position="104"/>
    </location>
</feature>
<feature type="strand" evidence="4">
    <location>
        <begin position="107"/>
        <end position="111"/>
    </location>
</feature>
<feature type="strand" evidence="4">
    <location>
        <begin position="125"/>
        <end position="131"/>
    </location>
</feature>
<feature type="strand" evidence="4">
    <location>
        <begin position="133"/>
        <end position="141"/>
    </location>
</feature>
<feature type="strand" evidence="4">
    <location>
        <begin position="147"/>
        <end position="152"/>
    </location>
</feature>
<feature type="strand" evidence="4">
    <location>
        <begin position="158"/>
        <end position="163"/>
    </location>
</feature>
<feature type="strand" evidence="3">
    <location>
        <begin position="172"/>
        <end position="174"/>
    </location>
</feature>
<feature type="strand" evidence="4">
    <location>
        <begin position="177"/>
        <end position="187"/>
    </location>
</feature>
<feature type="strand" evidence="3">
    <location>
        <begin position="191"/>
        <end position="193"/>
    </location>
</feature>
<feature type="strand" evidence="4">
    <location>
        <begin position="195"/>
        <end position="202"/>
    </location>
</feature>
<feature type="strand" evidence="3">
    <location>
        <begin position="205"/>
        <end position="207"/>
    </location>
</feature>
<feature type="strand" evidence="4">
    <location>
        <begin position="210"/>
        <end position="212"/>
    </location>
</feature>
<feature type="strand" evidence="3">
    <location>
        <begin position="214"/>
        <end position="216"/>
    </location>
</feature>
<feature type="helix" evidence="4">
    <location>
        <begin position="218"/>
        <end position="220"/>
    </location>
</feature>
<feature type="helix" evidence="4">
    <location>
        <begin position="225"/>
        <end position="227"/>
    </location>
</feature>
<protein>
    <recommendedName>
        <fullName>Basal-body rod modification protein FlgD</fullName>
    </recommendedName>
</protein>
<comment type="function">
    <text>Required for flagellar hook formation. May act as a scaffolding protein.</text>
</comment>
<comment type="interaction">
    <interactant intactId="EBI-6408673">
        <id>P0A1I9</id>
    </interactant>
    <interactant intactId="EBI-6408664">
        <id>P26416</id>
        <label>fliK</label>
    </interactant>
    <organismsDiffer>false</organismsDiffer>
    <experiments>2</experiments>
</comment>
<comment type="similarity">
    <text evidence="2">Belongs to the FlgD family.</text>
</comment>
<keyword id="KW-0002">3D-structure</keyword>
<keyword id="KW-1005">Bacterial flagellum biogenesis</keyword>
<keyword id="KW-1185">Reference proteome</keyword>
<accession>P0A1I9</accession>
<accession>P16321</accession>
<dbReference type="EMBL" id="D25293">
    <property type="protein sequence ID" value="BAA04982.1"/>
    <property type="molecule type" value="Genomic_DNA"/>
</dbReference>
<dbReference type="EMBL" id="AE006468">
    <property type="protein sequence ID" value="AAL20106.1"/>
    <property type="molecule type" value="Genomic_DNA"/>
</dbReference>
<dbReference type="EMBL" id="X51737">
    <property type="protein sequence ID" value="CAA36021.1"/>
    <property type="molecule type" value="Genomic_DNA"/>
</dbReference>
<dbReference type="PIR" id="S47641">
    <property type="entry name" value="S47641"/>
</dbReference>
<dbReference type="RefSeq" id="NP_460147.1">
    <property type="nucleotide sequence ID" value="NC_003197.2"/>
</dbReference>
<dbReference type="RefSeq" id="WP_000020450.1">
    <property type="nucleotide sequence ID" value="NC_003197.2"/>
</dbReference>
<dbReference type="PDB" id="7BHQ">
    <property type="method" value="EM"/>
    <property type="resolution" value="3.20 A"/>
    <property type="chains" value="A/B/C/D/E=1-232"/>
</dbReference>
<dbReference type="PDB" id="7EH9">
    <property type="method" value="X-ray"/>
    <property type="resolution" value="2.20 A"/>
    <property type="chains" value="A/B=74-232"/>
</dbReference>
<dbReference type="PDB" id="7EHA">
    <property type="method" value="X-ray"/>
    <property type="resolution" value="3.30 A"/>
    <property type="chains" value="A/B/C/D/E=1-232"/>
</dbReference>
<dbReference type="PDBsum" id="7BHQ"/>
<dbReference type="PDBsum" id="7EH9"/>
<dbReference type="PDBsum" id="7EHA"/>
<dbReference type="EMDB" id="EMD-12190"/>
<dbReference type="SMR" id="P0A1I9"/>
<dbReference type="IntAct" id="P0A1I9">
    <property type="interactions" value="1"/>
</dbReference>
<dbReference type="STRING" id="99287.STM1176"/>
<dbReference type="PaxDb" id="99287-STM1176"/>
<dbReference type="DNASU" id="1252694"/>
<dbReference type="GeneID" id="1252694"/>
<dbReference type="KEGG" id="stm:STM1176"/>
<dbReference type="PATRIC" id="fig|99287.12.peg.1244"/>
<dbReference type="HOGENOM" id="CLU_047535_0_0_6"/>
<dbReference type="OMA" id="STYAHVT"/>
<dbReference type="PhylomeDB" id="P0A1I9"/>
<dbReference type="BioCyc" id="SENT99287:STM1176-MONOMER"/>
<dbReference type="Proteomes" id="UP000001014">
    <property type="component" value="Chromosome"/>
</dbReference>
<dbReference type="GO" id="GO:0044781">
    <property type="term" value="P:bacterial-type flagellum organization"/>
    <property type="evidence" value="ECO:0007669"/>
    <property type="project" value="UniProtKB-KW"/>
</dbReference>
<dbReference type="FunFam" id="2.60.40.4070:FF:000001">
    <property type="entry name" value="Basal-body rod modification protein FlgD"/>
    <property type="match status" value="1"/>
</dbReference>
<dbReference type="Gene3D" id="2.30.30.910">
    <property type="match status" value="1"/>
</dbReference>
<dbReference type="Gene3D" id="2.60.40.4070">
    <property type="match status" value="1"/>
</dbReference>
<dbReference type="InterPro" id="IPR005648">
    <property type="entry name" value="FlgD"/>
</dbReference>
<dbReference type="InterPro" id="IPR025965">
    <property type="entry name" value="FlgD/Vpr_Ig-like"/>
</dbReference>
<dbReference type="InterPro" id="IPR025963">
    <property type="entry name" value="FLgD_Tudor"/>
</dbReference>
<dbReference type="NCBIfam" id="NF005176">
    <property type="entry name" value="PRK06655.1-1"/>
    <property type="match status" value="1"/>
</dbReference>
<dbReference type="Pfam" id="PF03963">
    <property type="entry name" value="FlgD"/>
    <property type="match status" value="1"/>
</dbReference>
<dbReference type="Pfam" id="PF13860">
    <property type="entry name" value="FlgD_ig"/>
    <property type="match status" value="1"/>
</dbReference>
<dbReference type="Pfam" id="PF13861">
    <property type="entry name" value="FLgD_tudor"/>
    <property type="match status" value="1"/>
</dbReference>
<gene>
    <name type="primary">flgD</name>
    <name type="synonym">fla FIV</name>
    <name type="synonym">flaV</name>
    <name type="ordered locus">STM1176</name>
</gene>
<name>FLGD_SALTY</name>